<reference key="1">
    <citation type="journal article" date="2009" name="Genome Biol.">
        <title>Genomic and genetic analyses of diversity and plant interactions of Pseudomonas fluorescens.</title>
        <authorList>
            <person name="Silby M.W."/>
            <person name="Cerdeno-Tarraga A.M."/>
            <person name="Vernikos G.S."/>
            <person name="Giddens S.R."/>
            <person name="Jackson R.W."/>
            <person name="Preston G.M."/>
            <person name="Zhang X.-X."/>
            <person name="Moon C.D."/>
            <person name="Gehrig S.M."/>
            <person name="Godfrey S.A.C."/>
            <person name="Knight C.G."/>
            <person name="Malone J.G."/>
            <person name="Robinson Z."/>
            <person name="Spiers A.J."/>
            <person name="Harris S."/>
            <person name="Challis G.L."/>
            <person name="Yaxley A.M."/>
            <person name="Harris D."/>
            <person name="Seeger K."/>
            <person name="Murphy L."/>
            <person name="Rutter S."/>
            <person name="Squares R."/>
            <person name="Quail M.A."/>
            <person name="Saunders E."/>
            <person name="Mavromatis K."/>
            <person name="Brettin T.S."/>
            <person name="Bentley S.D."/>
            <person name="Hothersall J."/>
            <person name="Stephens E."/>
            <person name="Thomas C.M."/>
            <person name="Parkhill J."/>
            <person name="Levy S.B."/>
            <person name="Rainey P.B."/>
            <person name="Thomson N.R."/>
        </authorList>
    </citation>
    <scope>NUCLEOTIDE SEQUENCE [LARGE SCALE GENOMIC DNA]</scope>
    <source>
        <strain>SBW25</strain>
    </source>
</reference>
<dbReference type="EMBL" id="AM181176">
    <property type="protein sequence ID" value="CAY48009.1"/>
    <property type="molecule type" value="Genomic_DNA"/>
</dbReference>
<dbReference type="RefSeq" id="WP_012723035.1">
    <property type="nucleotide sequence ID" value="NC_012660.1"/>
</dbReference>
<dbReference type="SMR" id="C3K4Z0"/>
<dbReference type="STRING" id="294.SRM1_01578"/>
<dbReference type="GeneID" id="93463453"/>
<dbReference type="eggNOG" id="COG2332">
    <property type="taxonomic scope" value="Bacteria"/>
</dbReference>
<dbReference type="HOGENOM" id="CLU_079503_1_1_6"/>
<dbReference type="OrthoDB" id="9793584at2"/>
<dbReference type="GO" id="GO:0005886">
    <property type="term" value="C:plasma membrane"/>
    <property type="evidence" value="ECO:0007669"/>
    <property type="project" value="UniProtKB-SubCell"/>
</dbReference>
<dbReference type="GO" id="GO:0020037">
    <property type="term" value="F:heme binding"/>
    <property type="evidence" value="ECO:0007669"/>
    <property type="project" value="InterPro"/>
</dbReference>
<dbReference type="GO" id="GO:0046872">
    <property type="term" value="F:metal ion binding"/>
    <property type="evidence" value="ECO:0007669"/>
    <property type="project" value="UniProtKB-KW"/>
</dbReference>
<dbReference type="GO" id="GO:0017004">
    <property type="term" value="P:cytochrome complex assembly"/>
    <property type="evidence" value="ECO:0007669"/>
    <property type="project" value="UniProtKB-KW"/>
</dbReference>
<dbReference type="FunFam" id="2.40.50.140:FF:000104">
    <property type="entry name" value="Cytochrome c-type biogenesis protein CcmE"/>
    <property type="match status" value="1"/>
</dbReference>
<dbReference type="Gene3D" id="2.40.50.140">
    <property type="entry name" value="Nucleic acid-binding proteins"/>
    <property type="match status" value="1"/>
</dbReference>
<dbReference type="HAMAP" id="MF_01959">
    <property type="entry name" value="CcmE"/>
    <property type="match status" value="1"/>
</dbReference>
<dbReference type="InterPro" id="IPR004329">
    <property type="entry name" value="CcmE"/>
</dbReference>
<dbReference type="InterPro" id="IPR036127">
    <property type="entry name" value="CcmE-like_sf"/>
</dbReference>
<dbReference type="InterPro" id="IPR012340">
    <property type="entry name" value="NA-bd_OB-fold"/>
</dbReference>
<dbReference type="NCBIfam" id="NF009727">
    <property type="entry name" value="PRK13254.1-1"/>
    <property type="match status" value="1"/>
</dbReference>
<dbReference type="NCBIfam" id="NF009729">
    <property type="entry name" value="PRK13254.1-3"/>
    <property type="match status" value="1"/>
</dbReference>
<dbReference type="NCBIfam" id="NF009731">
    <property type="entry name" value="PRK13254.1-5"/>
    <property type="match status" value="1"/>
</dbReference>
<dbReference type="PANTHER" id="PTHR34128">
    <property type="entry name" value="CYTOCHROME C-TYPE BIOGENESIS PROTEIN CCME HOMOLOG, MITOCHONDRIAL"/>
    <property type="match status" value="1"/>
</dbReference>
<dbReference type="PANTHER" id="PTHR34128:SF2">
    <property type="entry name" value="CYTOCHROME C-TYPE BIOGENESIS PROTEIN CCME HOMOLOG, MITOCHONDRIAL"/>
    <property type="match status" value="1"/>
</dbReference>
<dbReference type="Pfam" id="PF03100">
    <property type="entry name" value="CcmE"/>
    <property type="match status" value="1"/>
</dbReference>
<dbReference type="SUPFAM" id="SSF82093">
    <property type="entry name" value="Heme chaperone CcmE"/>
    <property type="match status" value="1"/>
</dbReference>
<proteinExistence type="inferred from homology"/>
<evidence type="ECO:0000255" key="1">
    <source>
        <dbReference type="HAMAP-Rule" id="MF_01959"/>
    </source>
</evidence>
<protein>
    <recommendedName>
        <fullName evidence="1">Cytochrome c-type biogenesis protein CcmE</fullName>
    </recommendedName>
    <alternativeName>
        <fullName evidence="1">Cytochrome c maturation protein E</fullName>
    </alternativeName>
    <alternativeName>
        <fullName evidence="1">Heme chaperone CcmE</fullName>
    </alternativeName>
</protein>
<name>CCME_PSEFS</name>
<keyword id="KW-0997">Cell inner membrane</keyword>
<keyword id="KW-1003">Cell membrane</keyword>
<keyword id="KW-0201">Cytochrome c-type biogenesis</keyword>
<keyword id="KW-0349">Heme</keyword>
<keyword id="KW-0408">Iron</keyword>
<keyword id="KW-0472">Membrane</keyword>
<keyword id="KW-0479">Metal-binding</keyword>
<keyword id="KW-0735">Signal-anchor</keyword>
<keyword id="KW-0812">Transmembrane</keyword>
<keyword id="KW-1133">Transmembrane helix</keyword>
<feature type="chain" id="PRO_1000216216" description="Cytochrome c-type biogenesis protein CcmE">
    <location>
        <begin position="1"/>
        <end position="151"/>
    </location>
</feature>
<feature type="topological domain" description="Cytoplasmic" evidence="1">
    <location>
        <begin position="1"/>
        <end position="8"/>
    </location>
</feature>
<feature type="transmembrane region" description="Helical; Signal-anchor for type II membrane protein" evidence="1">
    <location>
        <begin position="9"/>
        <end position="29"/>
    </location>
</feature>
<feature type="topological domain" description="Periplasmic" evidence="1">
    <location>
        <begin position="30"/>
        <end position="151"/>
    </location>
</feature>
<feature type="binding site" description="covalent" evidence="1">
    <location>
        <position position="124"/>
    </location>
    <ligand>
        <name>heme</name>
        <dbReference type="ChEBI" id="CHEBI:30413"/>
    </ligand>
</feature>
<feature type="binding site" description="axial binding residue" evidence="1">
    <location>
        <position position="128"/>
    </location>
    <ligand>
        <name>heme</name>
        <dbReference type="ChEBI" id="CHEBI:30413"/>
    </ligand>
    <ligandPart>
        <name>Fe</name>
        <dbReference type="ChEBI" id="CHEBI:18248"/>
    </ligandPart>
</feature>
<sequence length="151" mass="16111">MNPLRRKRLLIILAILVGVGIAVGLALSALQQNINLFYTPTQIANGEAPIDTRIRAGGMVEKGSLKRSGDSLDVTFVVTDFNKAVTITYRGILPDLFREGQGIVALGKLNADGVVVADEVLAKHDEKYMPPEVTKALKDSGQSAPTPAKEG</sequence>
<organism>
    <name type="scientific">Pseudomonas fluorescens (strain SBW25)</name>
    <dbReference type="NCBI Taxonomy" id="216595"/>
    <lineage>
        <taxon>Bacteria</taxon>
        <taxon>Pseudomonadati</taxon>
        <taxon>Pseudomonadota</taxon>
        <taxon>Gammaproteobacteria</taxon>
        <taxon>Pseudomonadales</taxon>
        <taxon>Pseudomonadaceae</taxon>
        <taxon>Pseudomonas</taxon>
    </lineage>
</organism>
<gene>
    <name evidence="1" type="primary">ccmE</name>
    <name evidence="1" type="synonym">cycJ</name>
    <name type="ordered locus">PFLU_1762</name>
</gene>
<accession>C3K4Z0</accession>
<comment type="function">
    <text evidence="1">Heme chaperone required for the biogenesis of c-type cytochromes. Transiently binds heme delivered by CcmC and transfers the heme to apo-cytochromes in a process facilitated by CcmF and CcmH.</text>
</comment>
<comment type="subcellular location">
    <subcellularLocation>
        <location evidence="1">Cell inner membrane</location>
        <topology evidence="1">Single-pass type II membrane protein</topology>
        <orientation evidence="1">Periplasmic side</orientation>
    </subcellularLocation>
</comment>
<comment type="similarity">
    <text evidence="1">Belongs to the CcmE/CycJ family.</text>
</comment>